<comment type="function">
    <text evidence="3 6">Mitochondrial methyltransferase which suppresses respiratory defects caused by OXA1 mutations when overexpressed.</text>
</comment>
<comment type="subcellular location">
    <subcellularLocation>
        <location evidence="4 6 7">Mitochondrion inner membrane</location>
        <topology evidence="4 6 7">Single-pass membrane protein</topology>
    </subcellularLocation>
</comment>
<comment type="miscellaneous">
    <text evidence="5">Present with 504 molecules/cell in log phase SD medium.</text>
</comment>
<comment type="similarity">
    <text evidence="8">Belongs to the methyltransferase superfamily. METL family.</text>
</comment>
<feature type="transit peptide" description="Mitochondrion" evidence="1">
    <location>
        <begin position="1"/>
        <end position="39"/>
    </location>
</feature>
<feature type="chain" id="PRO_0000268693" description="Methyltransferase OMS1, mitochondrial">
    <location>
        <begin position="40"/>
        <end position="471"/>
    </location>
</feature>
<feature type="topological domain" description="Mitochondrial matrix" evidence="6">
    <location>
        <begin position="40"/>
        <end position="103"/>
    </location>
</feature>
<feature type="transmembrane region" description="Helical" evidence="1">
    <location>
        <begin position="104"/>
        <end position="123"/>
    </location>
</feature>
<feature type="topological domain" description="Mitochondrial intermembrane" evidence="6">
    <location>
        <begin position="124"/>
        <end position="471"/>
    </location>
</feature>
<feature type="region of interest" description="Disordered" evidence="2">
    <location>
        <begin position="450"/>
        <end position="471"/>
    </location>
</feature>
<feature type="compositionally biased region" description="Basic and acidic residues" evidence="2">
    <location>
        <begin position="450"/>
        <end position="463"/>
    </location>
</feature>
<dbReference type="EC" id="2.1.1.-"/>
<dbReference type="EMBL" id="U28374">
    <property type="protein sequence ID" value="AAB64752.1"/>
    <property type="molecule type" value="Genomic_DNA"/>
</dbReference>
<dbReference type="EMBL" id="BK006938">
    <property type="protein sequence ID" value="DAA12155.1"/>
    <property type="molecule type" value="Genomic_DNA"/>
</dbReference>
<dbReference type="PIR" id="S61202">
    <property type="entry name" value="S61202"/>
</dbReference>
<dbReference type="RefSeq" id="NP_010602.3">
    <property type="nucleotide sequence ID" value="NM_001180624.3"/>
</dbReference>
<dbReference type="SMR" id="Q06668"/>
<dbReference type="BioGRID" id="32369">
    <property type="interactions" value="367"/>
</dbReference>
<dbReference type="DIP" id="DIP-6431N"/>
<dbReference type="FunCoup" id="Q06668">
    <property type="interactions" value="56"/>
</dbReference>
<dbReference type="IntAct" id="Q06668">
    <property type="interactions" value="14"/>
</dbReference>
<dbReference type="STRING" id="4932.YDR316W"/>
<dbReference type="iPTMnet" id="Q06668"/>
<dbReference type="PaxDb" id="4932-YDR316W"/>
<dbReference type="PeptideAtlas" id="Q06668"/>
<dbReference type="EnsemblFungi" id="YDR316W_mRNA">
    <property type="protein sequence ID" value="YDR316W"/>
    <property type="gene ID" value="YDR316W"/>
</dbReference>
<dbReference type="GeneID" id="851911"/>
<dbReference type="KEGG" id="sce:YDR316W"/>
<dbReference type="AGR" id="SGD:S000002724"/>
<dbReference type="SGD" id="S000002724">
    <property type="gene designation" value="OMS1"/>
</dbReference>
<dbReference type="VEuPathDB" id="FungiDB:YDR316W"/>
<dbReference type="eggNOG" id="KOG4300">
    <property type="taxonomic scope" value="Eukaryota"/>
</dbReference>
<dbReference type="GeneTree" id="ENSGT00940000175010"/>
<dbReference type="HOGENOM" id="CLU_665906_0_0_1"/>
<dbReference type="InParanoid" id="Q06668"/>
<dbReference type="OMA" id="TWGCRWN"/>
<dbReference type="OrthoDB" id="416496at2759"/>
<dbReference type="BioCyc" id="YEAST:G3O-29874-MONOMER"/>
<dbReference type="Reactome" id="R-SCE-6798695">
    <property type="pathway name" value="Neutrophil degranulation"/>
</dbReference>
<dbReference type="BioGRID-ORCS" id="851911">
    <property type="hits" value="0 hits in 10 CRISPR screens"/>
</dbReference>
<dbReference type="PRO" id="PR:Q06668"/>
<dbReference type="Proteomes" id="UP000002311">
    <property type="component" value="Chromosome IV"/>
</dbReference>
<dbReference type="RNAct" id="Q06668">
    <property type="molecule type" value="protein"/>
</dbReference>
<dbReference type="GO" id="GO:0005740">
    <property type="term" value="C:mitochondrial envelope"/>
    <property type="evidence" value="ECO:0000314"/>
    <property type="project" value="SGD"/>
</dbReference>
<dbReference type="GO" id="GO:0005743">
    <property type="term" value="C:mitochondrial inner membrane"/>
    <property type="evidence" value="ECO:0007669"/>
    <property type="project" value="UniProtKB-SubCell"/>
</dbReference>
<dbReference type="GO" id="GO:0005739">
    <property type="term" value="C:mitochondrion"/>
    <property type="evidence" value="ECO:0007005"/>
    <property type="project" value="SGD"/>
</dbReference>
<dbReference type="GO" id="GO:0008168">
    <property type="term" value="F:methyltransferase activity"/>
    <property type="evidence" value="ECO:0000318"/>
    <property type="project" value="GO_Central"/>
</dbReference>
<dbReference type="GO" id="GO:0008757">
    <property type="term" value="F:S-adenosylmethionine-dependent methyltransferase activity"/>
    <property type="evidence" value="ECO:0000250"/>
    <property type="project" value="SGD"/>
</dbReference>
<dbReference type="GO" id="GO:0032259">
    <property type="term" value="P:methylation"/>
    <property type="evidence" value="ECO:0007669"/>
    <property type="project" value="UniProtKB-KW"/>
</dbReference>
<dbReference type="CDD" id="cd02440">
    <property type="entry name" value="AdoMet_MTases"/>
    <property type="match status" value="1"/>
</dbReference>
<dbReference type="FunFam" id="3.40.50.150:FF:000371">
    <property type="entry name" value="Methyltransferase OMS1, mitochondrial"/>
    <property type="match status" value="1"/>
</dbReference>
<dbReference type="Gene3D" id="3.40.50.150">
    <property type="entry name" value="Vaccinia Virus protein VP39"/>
    <property type="match status" value="1"/>
</dbReference>
<dbReference type="InterPro" id="IPR050508">
    <property type="entry name" value="Methyltransf_Superfamily"/>
</dbReference>
<dbReference type="InterPro" id="IPR029063">
    <property type="entry name" value="SAM-dependent_MTases_sf"/>
</dbReference>
<dbReference type="PANTHER" id="PTHR42912">
    <property type="entry name" value="METHYLTRANSFERASE"/>
    <property type="match status" value="1"/>
</dbReference>
<dbReference type="PANTHER" id="PTHR42912:SF83">
    <property type="entry name" value="METHYLTRANSFERASE TYPE 11 DOMAIN-CONTAINING PROTEIN"/>
    <property type="match status" value="1"/>
</dbReference>
<dbReference type="Pfam" id="PF13489">
    <property type="entry name" value="Methyltransf_23"/>
    <property type="match status" value="1"/>
</dbReference>
<dbReference type="SUPFAM" id="SSF53335">
    <property type="entry name" value="S-adenosyl-L-methionine-dependent methyltransferases"/>
    <property type="match status" value="1"/>
</dbReference>
<protein>
    <recommendedName>
        <fullName>Methyltransferase OMS1, mitochondrial</fullName>
        <ecNumber>2.1.1.-</ecNumber>
    </recommendedName>
    <alternativeName>
        <fullName>OXA1 multicopy suppressor 1</fullName>
    </alternativeName>
</protein>
<organism>
    <name type="scientific">Saccharomyces cerevisiae (strain ATCC 204508 / S288c)</name>
    <name type="common">Baker's yeast</name>
    <dbReference type="NCBI Taxonomy" id="559292"/>
    <lineage>
        <taxon>Eukaryota</taxon>
        <taxon>Fungi</taxon>
        <taxon>Dikarya</taxon>
        <taxon>Ascomycota</taxon>
        <taxon>Saccharomycotina</taxon>
        <taxon>Saccharomycetes</taxon>
        <taxon>Saccharomycetales</taxon>
        <taxon>Saccharomycetaceae</taxon>
        <taxon>Saccharomyces</taxon>
    </lineage>
</organism>
<proteinExistence type="evidence at protein level"/>
<evidence type="ECO:0000255" key="1"/>
<evidence type="ECO:0000256" key="2">
    <source>
        <dbReference type="SAM" id="MobiDB-lite"/>
    </source>
</evidence>
<evidence type="ECO:0000269" key="3">
    <source>
    </source>
</evidence>
<evidence type="ECO:0000269" key="4">
    <source>
    </source>
</evidence>
<evidence type="ECO:0000269" key="5">
    <source>
    </source>
</evidence>
<evidence type="ECO:0000269" key="6">
    <source>
    </source>
</evidence>
<evidence type="ECO:0000269" key="7">
    <source>
    </source>
</evidence>
<evidence type="ECO:0000305" key="8"/>
<gene>
    <name type="primary">OMS1</name>
    <name type="ordered locus">YDR316W</name>
</gene>
<name>OMS1_YEAST</name>
<accession>Q06668</accession>
<accession>D6VSU5</accession>
<keyword id="KW-0472">Membrane</keyword>
<keyword id="KW-0489">Methyltransferase</keyword>
<keyword id="KW-0496">Mitochondrion</keyword>
<keyword id="KW-0999">Mitochondrion inner membrane</keyword>
<keyword id="KW-1185">Reference proteome</keyword>
<keyword id="KW-0808">Transferase</keyword>
<keyword id="KW-0809">Transit peptide</keyword>
<keyword id="KW-0812">Transmembrane</keyword>
<keyword id="KW-1133">Transmembrane helix</keyword>
<sequence length="471" mass="55589">MIVFRRFPTCLLHHIRQPASRSLLLESQRRSLSFTSYKYNSSHIDDDKSKKKLKNVFQMNSNRVIRKQKTKEELAKERFEEQLRSPNRFVRWGAIARSEKFSKGMTKYMIGAYVIFLIYGLFFTKKLFAKDKELERLLKKQEEGNANEYEALRIKELKGKLRRRDELKLEEYKKMQEEGIENFDDIRVQNFDQNKLNEQILPARDTTNFYQEKANEYDKAINMEERVIFLGKRRKWLMKHCQGDVLEVSCGTGRNIKYLDMSRINSITFLDSSENMMEITHKKFREKFPKYKKVAFVVGKAENLVDLAEKGKPSLENEKENQVKYDTIVEAFGLCSHEDPVKALNNFGKLLKPDGRIILLEHGRGQYDFINKILDNRAERRLNTWGCRWNLDLGEVLDDSDLELVEEKRTHLGTTWCIVAKRKGDVKKKDELGFVEKYLQSSIRKRMESFEKKDDMASKKELEPVPPVSKS</sequence>
<reference key="1">
    <citation type="journal article" date="1997" name="Nature">
        <title>The nucleotide sequence of Saccharomyces cerevisiae chromosome IV.</title>
        <authorList>
            <person name="Jacq C."/>
            <person name="Alt-Moerbe J."/>
            <person name="Andre B."/>
            <person name="Arnold W."/>
            <person name="Bahr A."/>
            <person name="Ballesta J.P.G."/>
            <person name="Bargues M."/>
            <person name="Baron L."/>
            <person name="Becker A."/>
            <person name="Biteau N."/>
            <person name="Bloecker H."/>
            <person name="Blugeon C."/>
            <person name="Boskovic J."/>
            <person name="Brandt P."/>
            <person name="Brueckner M."/>
            <person name="Buitrago M.J."/>
            <person name="Coster F."/>
            <person name="Delaveau T."/>
            <person name="del Rey F."/>
            <person name="Dujon B."/>
            <person name="Eide L.G."/>
            <person name="Garcia-Cantalejo J.M."/>
            <person name="Goffeau A."/>
            <person name="Gomez-Peris A."/>
            <person name="Granotier C."/>
            <person name="Hanemann V."/>
            <person name="Hankeln T."/>
            <person name="Hoheisel J.D."/>
            <person name="Jaeger W."/>
            <person name="Jimenez A."/>
            <person name="Jonniaux J.-L."/>
            <person name="Kraemer C."/>
            <person name="Kuester H."/>
            <person name="Laamanen P."/>
            <person name="Legros Y."/>
            <person name="Louis E.J."/>
            <person name="Moeller-Rieker S."/>
            <person name="Monnet A."/>
            <person name="Moro M."/>
            <person name="Mueller-Auer S."/>
            <person name="Nussbaumer B."/>
            <person name="Paricio N."/>
            <person name="Paulin L."/>
            <person name="Perea J."/>
            <person name="Perez-Alonso M."/>
            <person name="Perez-Ortin J.E."/>
            <person name="Pohl T.M."/>
            <person name="Prydz H."/>
            <person name="Purnelle B."/>
            <person name="Rasmussen S.W."/>
            <person name="Remacha M.A."/>
            <person name="Revuelta J.L."/>
            <person name="Rieger M."/>
            <person name="Salom D."/>
            <person name="Saluz H.P."/>
            <person name="Saiz J.E."/>
            <person name="Saren A.-M."/>
            <person name="Schaefer M."/>
            <person name="Scharfe M."/>
            <person name="Schmidt E.R."/>
            <person name="Schneider C."/>
            <person name="Scholler P."/>
            <person name="Schwarz S."/>
            <person name="Soler-Mira A."/>
            <person name="Urrestarazu L.A."/>
            <person name="Verhasselt P."/>
            <person name="Vissers S."/>
            <person name="Voet M."/>
            <person name="Volckaert G."/>
            <person name="Wagner G."/>
            <person name="Wambutt R."/>
            <person name="Wedler E."/>
            <person name="Wedler H."/>
            <person name="Woelfl S."/>
            <person name="Harris D.E."/>
            <person name="Bowman S."/>
            <person name="Brown D."/>
            <person name="Churcher C.M."/>
            <person name="Connor R."/>
            <person name="Dedman K."/>
            <person name="Gentles S."/>
            <person name="Hamlin N."/>
            <person name="Hunt S."/>
            <person name="Jones L."/>
            <person name="McDonald S."/>
            <person name="Murphy L.D."/>
            <person name="Niblett D."/>
            <person name="Odell C."/>
            <person name="Oliver K."/>
            <person name="Rajandream M.A."/>
            <person name="Richards C."/>
            <person name="Shore L."/>
            <person name="Walsh S.V."/>
            <person name="Barrell B.G."/>
            <person name="Dietrich F.S."/>
            <person name="Mulligan J.T."/>
            <person name="Allen E."/>
            <person name="Araujo R."/>
            <person name="Aviles E."/>
            <person name="Berno A."/>
            <person name="Carpenter J."/>
            <person name="Chen E."/>
            <person name="Cherry J.M."/>
            <person name="Chung E."/>
            <person name="Duncan M."/>
            <person name="Hunicke-Smith S."/>
            <person name="Hyman R.W."/>
            <person name="Komp C."/>
            <person name="Lashkari D."/>
            <person name="Lew H."/>
            <person name="Lin D."/>
            <person name="Mosedale D."/>
            <person name="Nakahara K."/>
            <person name="Namath A."/>
            <person name="Oefner P."/>
            <person name="Oh C."/>
            <person name="Petel F.X."/>
            <person name="Roberts D."/>
            <person name="Schramm S."/>
            <person name="Schroeder M."/>
            <person name="Shogren T."/>
            <person name="Shroff N."/>
            <person name="Winant A."/>
            <person name="Yelton M.A."/>
            <person name="Botstein D."/>
            <person name="Davis R.W."/>
            <person name="Johnston M."/>
            <person name="Andrews S."/>
            <person name="Brinkman R."/>
            <person name="Cooper J."/>
            <person name="Ding H."/>
            <person name="Du Z."/>
            <person name="Favello A."/>
            <person name="Fulton L."/>
            <person name="Gattung S."/>
            <person name="Greco T."/>
            <person name="Hallsworth K."/>
            <person name="Hawkins J."/>
            <person name="Hillier L.W."/>
            <person name="Jier M."/>
            <person name="Johnson D."/>
            <person name="Johnston L."/>
            <person name="Kirsten J."/>
            <person name="Kucaba T."/>
            <person name="Langston Y."/>
            <person name="Latreille P."/>
            <person name="Le T."/>
            <person name="Mardis E."/>
            <person name="Menezes S."/>
            <person name="Miller N."/>
            <person name="Nhan M."/>
            <person name="Pauley A."/>
            <person name="Peluso D."/>
            <person name="Rifkin L."/>
            <person name="Riles L."/>
            <person name="Taich A."/>
            <person name="Trevaskis E."/>
            <person name="Vignati D."/>
            <person name="Wilcox L."/>
            <person name="Wohldman P."/>
            <person name="Vaudin M."/>
            <person name="Wilson R."/>
            <person name="Waterston R."/>
            <person name="Albermann K."/>
            <person name="Hani J."/>
            <person name="Heumann K."/>
            <person name="Kleine K."/>
            <person name="Mewes H.-W."/>
            <person name="Zollner A."/>
            <person name="Zaccaria P."/>
        </authorList>
    </citation>
    <scope>NUCLEOTIDE SEQUENCE [LARGE SCALE GENOMIC DNA]</scope>
    <source>
        <strain>ATCC 204508 / S288c</strain>
    </source>
</reference>
<reference key="2">
    <citation type="journal article" date="2014" name="G3 (Bethesda)">
        <title>The reference genome sequence of Saccharomyces cerevisiae: Then and now.</title>
        <authorList>
            <person name="Engel S.R."/>
            <person name="Dietrich F.S."/>
            <person name="Fisk D.G."/>
            <person name="Binkley G."/>
            <person name="Balakrishnan R."/>
            <person name="Costanzo M.C."/>
            <person name="Dwight S.S."/>
            <person name="Hitz B.C."/>
            <person name="Karra K."/>
            <person name="Nash R.S."/>
            <person name="Weng S."/>
            <person name="Wong E.D."/>
            <person name="Lloyd P."/>
            <person name="Skrzypek M.S."/>
            <person name="Miyasato S.R."/>
            <person name="Simison M."/>
            <person name="Cherry J.M."/>
        </authorList>
    </citation>
    <scope>GENOME REANNOTATION</scope>
    <source>
        <strain>ATCC 204508 / S288c</strain>
    </source>
</reference>
<reference key="3">
    <citation type="journal article" date="2003" name="Mol. Cell. Proteomics">
        <title>Automated identification of putative methyltransferases from genomic open reading frames.</title>
        <authorList>
            <person name="Katz J.E."/>
            <person name="Dlakic M."/>
            <person name="Clarke S."/>
        </authorList>
    </citation>
    <scope>FUNCTION</scope>
</reference>
<reference key="4">
    <citation type="journal article" date="2003" name="Nature">
        <title>Global analysis of protein localization in budding yeast.</title>
        <authorList>
            <person name="Huh W.-K."/>
            <person name="Falvo J.V."/>
            <person name="Gerke L.C."/>
            <person name="Carroll A.S."/>
            <person name="Howson R.W."/>
            <person name="Weissman J.S."/>
            <person name="O'Shea E.K."/>
        </authorList>
    </citation>
    <scope>SUBCELLULAR LOCATION [LARGE SCALE ANALYSIS]</scope>
</reference>
<reference key="5">
    <citation type="journal article" date="2003" name="Nature">
        <title>Global analysis of protein expression in yeast.</title>
        <authorList>
            <person name="Ghaemmaghami S."/>
            <person name="Huh W.-K."/>
            <person name="Bower K."/>
            <person name="Howson R.W."/>
            <person name="Belle A."/>
            <person name="Dephoure N."/>
            <person name="O'Shea E.K."/>
            <person name="Weissman J.S."/>
        </authorList>
    </citation>
    <scope>LEVEL OF PROTEIN EXPRESSION [LARGE SCALE ANALYSIS]</scope>
</reference>
<reference key="6">
    <citation type="journal article" date="2004" name="J. Biol. Chem.">
        <title>A yeast mitochondrial membrane methyltransferase-like protein can compensate for oxa1 mutations.</title>
        <authorList>
            <person name="Lemaire C."/>
            <person name="Guibet-Grandmougin F."/>
            <person name="Angles D."/>
            <person name="Dujardin G."/>
            <person name="Bonnefoy N."/>
        </authorList>
    </citation>
    <scope>FUNCTION</scope>
    <scope>SUBCELLULAR LOCATION</scope>
    <scope>TOPOLOGY</scope>
</reference>
<reference key="7">
    <citation type="journal article" date="2006" name="J. Proteome Res.">
        <title>Toward the complete yeast mitochondrial proteome: multidimensional separation techniques for mitochondrial proteomics.</title>
        <authorList>
            <person name="Reinders J."/>
            <person name="Zahedi R.P."/>
            <person name="Pfanner N."/>
            <person name="Meisinger C."/>
            <person name="Sickmann A."/>
        </authorList>
    </citation>
    <scope>SUBCELLULAR LOCATION [LARGE SCALE ANALYSIS]</scope>
    <scope>IDENTIFICATION BY MASS SPECTROMETRY</scope>
</reference>